<organism>
    <name type="scientific">Paraburkholderia phymatum (strain DSM 17167 / CIP 108236 / LMG 21445 / STM815)</name>
    <name type="common">Burkholderia phymatum</name>
    <dbReference type="NCBI Taxonomy" id="391038"/>
    <lineage>
        <taxon>Bacteria</taxon>
        <taxon>Pseudomonadati</taxon>
        <taxon>Pseudomonadota</taxon>
        <taxon>Betaproteobacteria</taxon>
        <taxon>Burkholderiales</taxon>
        <taxon>Burkholderiaceae</taxon>
        <taxon>Paraburkholderia</taxon>
    </lineage>
</organism>
<gene>
    <name evidence="1" type="primary">proA</name>
    <name type="ordered locus">Bphy_2585</name>
</gene>
<comment type="function">
    <text evidence="1">Catalyzes the NADPH-dependent reduction of L-glutamate 5-phosphate into L-glutamate 5-semialdehyde and phosphate. The product spontaneously undergoes cyclization to form 1-pyrroline-5-carboxylate.</text>
</comment>
<comment type="catalytic activity">
    <reaction evidence="1">
        <text>L-glutamate 5-semialdehyde + phosphate + NADP(+) = L-glutamyl 5-phosphate + NADPH + H(+)</text>
        <dbReference type="Rhea" id="RHEA:19541"/>
        <dbReference type="ChEBI" id="CHEBI:15378"/>
        <dbReference type="ChEBI" id="CHEBI:43474"/>
        <dbReference type="ChEBI" id="CHEBI:57783"/>
        <dbReference type="ChEBI" id="CHEBI:58066"/>
        <dbReference type="ChEBI" id="CHEBI:58274"/>
        <dbReference type="ChEBI" id="CHEBI:58349"/>
        <dbReference type="EC" id="1.2.1.41"/>
    </reaction>
</comment>
<comment type="pathway">
    <text evidence="1">Amino-acid biosynthesis; L-proline biosynthesis; L-glutamate 5-semialdehyde from L-glutamate: step 2/2.</text>
</comment>
<comment type="subcellular location">
    <subcellularLocation>
        <location evidence="1">Cytoplasm</location>
    </subcellularLocation>
</comment>
<comment type="similarity">
    <text evidence="1">Belongs to the gamma-glutamyl phosphate reductase family.</text>
</comment>
<dbReference type="EC" id="1.2.1.41" evidence="1"/>
<dbReference type="EMBL" id="CP001043">
    <property type="protein sequence ID" value="ACC71757.1"/>
    <property type="molecule type" value="Genomic_DNA"/>
</dbReference>
<dbReference type="RefSeq" id="WP_012401959.1">
    <property type="nucleotide sequence ID" value="NC_010622.1"/>
</dbReference>
<dbReference type="SMR" id="B2JGX3"/>
<dbReference type="STRING" id="391038.Bphy_2585"/>
<dbReference type="KEGG" id="bph:Bphy_2585"/>
<dbReference type="eggNOG" id="COG0014">
    <property type="taxonomic scope" value="Bacteria"/>
</dbReference>
<dbReference type="HOGENOM" id="CLU_030231_0_0_4"/>
<dbReference type="OrthoDB" id="9809970at2"/>
<dbReference type="UniPathway" id="UPA00098">
    <property type="reaction ID" value="UER00360"/>
</dbReference>
<dbReference type="Proteomes" id="UP000001192">
    <property type="component" value="Chromosome 1"/>
</dbReference>
<dbReference type="GO" id="GO:0005737">
    <property type="term" value="C:cytoplasm"/>
    <property type="evidence" value="ECO:0007669"/>
    <property type="project" value="UniProtKB-SubCell"/>
</dbReference>
<dbReference type="GO" id="GO:0004350">
    <property type="term" value="F:glutamate-5-semialdehyde dehydrogenase activity"/>
    <property type="evidence" value="ECO:0007669"/>
    <property type="project" value="UniProtKB-UniRule"/>
</dbReference>
<dbReference type="GO" id="GO:0050661">
    <property type="term" value="F:NADP binding"/>
    <property type="evidence" value="ECO:0007669"/>
    <property type="project" value="InterPro"/>
</dbReference>
<dbReference type="GO" id="GO:0055129">
    <property type="term" value="P:L-proline biosynthetic process"/>
    <property type="evidence" value="ECO:0007669"/>
    <property type="project" value="UniProtKB-UniRule"/>
</dbReference>
<dbReference type="CDD" id="cd07079">
    <property type="entry name" value="ALDH_F18-19_ProA-GPR"/>
    <property type="match status" value="1"/>
</dbReference>
<dbReference type="FunFam" id="3.40.309.10:FF:000006">
    <property type="entry name" value="Gamma-glutamyl phosphate reductase"/>
    <property type="match status" value="1"/>
</dbReference>
<dbReference type="Gene3D" id="3.40.605.10">
    <property type="entry name" value="Aldehyde Dehydrogenase, Chain A, domain 1"/>
    <property type="match status" value="1"/>
</dbReference>
<dbReference type="Gene3D" id="3.40.309.10">
    <property type="entry name" value="Aldehyde Dehydrogenase, Chain A, domain 2"/>
    <property type="match status" value="1"/>
</dbReference>
<dbReference type="HAMAP" id="MF_00412">
    <property type="entry name" value="ProA"/>
    <property type="match status" value="1"/>
</dbReference>
<dbReference type="InterPro" id="IPR016161">
    <property type="entry name" value="Ald_DH/histidinol_DH"/>
</dbReference>
<dbReference type="InterPro" id="IPR016163">
    <property type="entry name" value="Ald_DH_C"/>
</dbReference>
<dbReference type="InterPro" id="IPR016162">
    <property type="entry name" value="Ald_DH_N"/>
</dbReference>
<dbReference type="InterPro" id="IPR015590">
    <property type="entry name" value="Aldehyde_DH_dom"/>
</dbReference>
<dbReference type="InterPro" id="IPR020593">
    <property type="entry name" value="G-glutamylP_reductase_CS"/>
</dbReference>
<dbReference type="InterPro" id="IPR012134">
    <property type="entry name" value="Glu-5-SA_DH"/>
</dbReference>
<dbReference type="InterPro" id="IPR000965">
    <property type="entry name" value="GPR_dom"/>
</dbReference>
<dbReference type="NCBIfam" id="NF001221">
    <property type="entry name" value="PRK00197.1"/>
    <property type="match status" value="1"/>
</dbReference>
<dbReference type="NCBIfam" id="TIGR00407">
    <property type="entry name" value="proA"/>
    <property type="match status" value="1"/>
</dbReference>
<dbReference type="PANTHER" id="PTHR11063:SF8">
    <property type="entry name" value="DELTA-1-PYRROLINE-5-CARBOXYLATE SYNTHASE"/>
    <property type="match status" value="1"/>
</dbReference>
<dbReference type="PANTHER" id="PTHR11063">
    <property type="entry name" value="GLUTAMATE SEMIALDEHYDE DEHYDROGENASE"/>
    <property type="match status" value="1"/>
</dbReference>
<dbReference type="Pfam" id="PF00171">
    <property type="entry name" value="Aldedh"/>
    <property type="match status" value="2"/>
</dbReference>
<dbReference type="PIRSF" id="PIRSF000151">
    <property type="entry name" value="GPR"/>
    <property type="match status" value="1"/>
</dbReference>
<dbReference type="SUPFAM" id="SSF53720">
    <property type="entry name" value="ALDH-like"/>
    <property type="match status" value="1"/>
</dbReference>
<dbReference type="PROSITE" id="PS01223">
    <property type="entry name" value="PROA"/>
    <property type="match status" value="1"/>
</dbReference>
<name>PROA_PARP8</name>
<sequence>MDIDQYMTDLGRRARHASRAMARASTAAKNAALEAVAVAIEREADTLRQANARDLARARDKGHDAAFIDRLTLSDKALKTMVEGLRQVAALADPIGEISNLKFRPSGIQVGQMRVPLGVIGIIYESRPNVTIDAAALCLKSGNATILRGGSEALECNTALARLIGEGLDKAGLPQEAVQVVETSDRAAVGKLITMTDYVDVIVPRGGKSLIARLMEESRVPMIKHLDGICHVYVDDRADVAKALNVCDNAKTHRYGTCNTMETLLVARGIAAHVLPALGKLYREKEVELRVDSAARAVLTEAGVAPLVDATEEDWRTEYLAPVLAVKVVDGIDDAIGHINEYGSHHTDAIVTEDHDRAMRFLREVDSASVMVNASTRFADGFEFGLGAEIGISNDKLHARGPVGLEGLTSLKYVVLGHGEGRQ</sequence>
<protein>
    <recommendedName>
        <fullName evidence="1">Gamma-glutamyl phosphate reductase</fullName>
        <shortName evidence="1">GPR</shortName>
        <ecNumber evidence="1">1.2.1.41</ecNumber>
    </recommendedName>
    <alternativeName>
        <fullName evidence="1">Glutamate-5-semialdehyde dehydrogenase</fullName>
    </alternativeName>
    <alternativeName>
        <fullName evidence="1">Glutamyl-gamma-semialdehyde dehydrogenase</fullName>
        <shortName evidence="1">GSA dehydrogenase</shortName>
    </alternativeName>
</protein>
<proteinExistence type="inferred from homology"/>
<feature type="chain" id="PRO_1000193580" description="Gamma-glutamyl phosphate reductase">
    <location>
        <begin position="1"/>
        <end position="423"/>
    </location>
</feature>
<accession>B2JGX3</accession>
<reference key="1">
    <citation type="journal article" date="2014" name="Stand. Genomic Sci.">
        <title>Complete genome sequence of Burkholderia phymatum STM815(T), a broad host range and efficient nitrogen-fixing symbiont of Mimosa species.</title>
        <authorList>
            <person name="Moulin L."/>
            <person name="Klonowska A."/>
            <person name="Caroline B."/>
            <person name="Booth K."/>
            <person name="Vriezen J.A."/>
            <person name="Melkonian R."/>
            <person name="James E.K."/>
            <person name="Young J.P."/>
            <person name="Bena G."/>
            <person name="Hauser L."/>
            <person name="Land M."/>
            <person name="Kyrpides N."/>
            <person name="Bruce D."/>
            <person name="Chain P."/>
            <person name="Copeland A."/>
            <person name="Pitluck S."/>
            <person name="Woyke T."/>
            <person name="Lizotte-Waniewski M."/>
            <person name="Bristow J."/>
            <person name="Riley M."/>
        </authorList>
    </citation>
    <scope>NUCLEOTIDE SEQUENCE [LARGE SCALE GENOMIC DNA]</scope>
    <source>
        <strain>DSM 17167 / CIP 108236 / LMG 21445 / STM815</strain>
    </source>
</reference>
<evidence type="ECO:0000255" key="1">
    <source>
        <dbReference type="HAMAP-Rule" id="MF_00412"/>
    </source>
</evidence>
<keyword id="KW-0028">Amino-acid biosynthesis</keyword>
<keyword id="KW-0963">Cytoplasm</keyword>
<keyword id="KW-0521">NADP</keyword>
<keyword id="KW-0560">Oxidoreductase</keyword>
<keyword id="KW-0641">Proline biosynthesis</keyword>
<keyword id="KW-1185">Reference proteome</keyword>